<accession>P26326</accession>
<feature type="signal peptide">
    <location>
        <begin position="1"/>
        <end position="21"/>
    </location>
</feature>
<feature type="chain" id="PRO_0000036417" description="Variant surface glycoprotein ILTAT 1.21">
    <location>
        <begin position="22"/>
        <end position="454"/>
    </location>
</feature>
<feature type="propeptide" id="PRO_0000036418" description="Removed in mature form" evidence="2">
    <location>
        <begin position="455"/>
        <end position="471"/>
    </location>
</feature>
<feature type="region of interest" description="Disordered" evidence="3">
    <location>
        <begin position="406"/>
        <end position="449"/>
    </location>
</feature>
<feature type="compositionally biased region" description="Basic and acidic residues" evidence="3">
    <location>
        <begin position="412"/>
        <end position="431"/>
    </location>
</feature>
<feature type="lipid moiety-binding region" description="GPI-anchor amidated serine" evidence="2">
    <location>
        <position position="454"/>
    </location>
</feature>
<feature type="glycosylation site" description="N-linked (GlcNAc...) asparagine" evidence="2">
    <location>
        <position position="64"/>
    </location>
</feature>
<feature type="glycosylation site" description="N-linked (GlcNAc...) asparagine" evidence="2">
    <location>
        <position position="405"/>
    </location>
</feature>
<feature type="glycosylation site" description="N-linked (GlcNAc...) asparagine" evidence="2">
    <location>
        <position position="450"/>
    </location>
</feature>
<reference key="1">
    <citation type="journal article" date="1991" name="J. Mol. Biol.">
        <title>Variant specific glycoprotein of Trypanosoma brucei consists of two domains each having an independently conserved pattern of cysteine residues.</title>
        <authorList>
            <person name="Carrington M."/>
            <person name="Miller N."/>
            <person name="Blum M.L."/>
            <person name="Roditi I."/>
            <person name="Wiley D.C."/>
            <person name="Turner M.J."/>
        </authorList>
    </citation>
    <scope>NUCLEOTIDE SEQUENCE [MRNA]</scope>
    <source>
        <strain>Isolate MIAG 201</strain>
    </source>
</reference>
<sequence>MLRALLPSTTLALILAGGGHAAVGDAFPAFAVLCAAWDAATNKQIKPWSEDRELPELNDIYNMNMSIASEEWQTIFDGQAEQQTWSQFAQANAGKYKGIDWKQNWDRWRKQRQQTKDAGGAWQTKNHRPEWAATPRDVRPVILAIAEEATELSRKLEPPRTADGKDLIAEINSKLASARCSGELKAAAGNIGCTGPEGTPDKTTTCTTAKAGGSIGHDMLCLCSVAEATDKCSSTGVGDAVPNSGEKLRSNGFQHIVARCPKGPESGTLPQAIDLALAMLATALGTQQPGSNNMILGKSGGGTCTATNSACVDYHEKFSKQQAGITGIPWVALLQQARALYGTYVDAKLAAQTARQQIVMLAGQAKREYRRPAGSLKDPAGVIQEQATNRRRHGADDTNQCTSNNATADECPETRCEYDSEKNECRPKKGTETTATGPGERTTPADGKANNTVSDSLLIKTSPLWLAFLLF</sequence>
<organism>
    <name type="scientific">Trypanosoma brucei brucei</name>
    <dbReference type="NCBI Taxonomy" id="5702"/>
    <lineage>
        <taxon>Eukaryota</taxon>
        <taxon>Discoba</taxon>
        <taxon>Euglenozoa</taxon>
        <taxon>Kinetoplastea</taxon>
        <taxon>Metakinetoplastina</taxon>
        <taxon>Trypanosomatida</taxon>
        <taxon>Trypanosomatidae</taxon>
        <taxon>Trypanosoma</taxon>
    </lineage>
</organism>
<evidence type="ECO:0000250" key="1"/>
<evidence type="ECO:0000255" key="2"/>
<evidence type="ECO:0000256" key="3">
    <source>
        <dbReference type="SAM" id="MobiDB-lite"/>
    </source>
</evidence>
<dbReference type="EMBL" id="X56766">
    <property type="protein sequence ID" value="CAA40085.1"/>
    <property type="molecule type" value="mRNA"/>
</dbReference>
<dbReference type="PIR" id="S18446">
    <property type="entry name" value="S18446"/>
</dbReference>
<dbReference type="SMR" id="P26326"/>
<dbReference type="GO" id="GO:0005886">
    <property type="term" value="C:plasma membrane"/>
    <property type="evidence" value="ECO:0007669"/>
    <property type="project" value="UniProtKB-SubCell"/>
</dbReference>
<dbReference type="GO" id="GO:0098552">
    <property type="term" value="C:side of membrane"/>
    <property type="evidence" value="ECO:0007669"/>
    <property type="project" value="UniProtKB-KW"/>
</dbReference>
<dbReference type="InterPro" id="IPR025932">
    <property type="entry name" value="Trypano_VSG_B_N_dom"/>
</dbReference>
<dbReference type="Pfam" id="PF13206">
    <property type="entry name" value="VSG_B"/>
    <property type="match status" value="1"/>
</dbReference>
<keyword id="KW-1003">Cell membrane</keyword>
<keyword id="KW-0325">Glycoprotein</keyword>
<keyword id="KW-0336">GPI-anchor</keyword>
<keyword id="KW-0449">Lipoprotein</keyword>
<keyword id="KW-0472">Membrane</keyword>
<keyword id="KW-0732">Signal</keyword>
<keyword id="KW-0821">Trypanosomiasis</keyword>
<name>VSI1_TRYBB</name>
<protein>
    <recommendedName>
        <fullName>Variant surface glycoprotein ILTAT 1.21</fullName>
        <shortName>VSG</shortName>
    </recommendedName>
</protein>
<proteinExistence type="evidence at transcript level"/>
<comment type="function">
    <text>VSG forms a coat on the surface of the parasite. The trypanosome evades the immune response of the host by expressing a series of antigenically distinct VSGs from an estimated 1000 VSG genes.</text>
</comment>
<comment type="subcellular location">
    <subcellularLocation>
        <location>Cell membrane</location>
        <topology>Lipid-anchor</topology>
        <topology>GPI-anchor</topology>
    </subcellularLocation>
    <text evidence="1">A soluble form is released from ruptured cells by the action of a PI-PLC.</text>
</comment>